<reference evidence="3" key="1">
    <citation type="journal article" date="2008" name="World J. Microbiol. Biotechnol.">
        <title>A novel fibrinolytic enzyme from Cordyceps militaris, a Chinese traditional medicinal mushroom.</title>
        <authorList>
            <person name="Cui L."/>
            <person name="Dong M.S."/>
            <person name="Chen X.H."/>
            <person name="Jiang M."/>
            <person name="Lv X."/>
            <person name="Yan G."/>
        </authorList>
        <dbReference type="AGRICOLA" id="IND44034274"/>
    </citation>
    <scope>PROTEIN SEQUENCE</scope>
    <scope>FUNCTION</scope>
    <scope>ACTIVITY REGULATION</scope>
    <scope>BIOPHYSICOCHEMICAL PROPERTIES</scope>
    <scope>SUBCELLULAR LOCATION</scope>
</reference>
<evidence type="ECO:0000269" key="1">
    <source ref="1"/>
</evidence>
<evidence type="ECO:0000303" key="2">
    <source ref="1"/>
</evidence>
<evidence type="ECO:0000305" key="3"/>
<name>FIBR_CORMI</name>
<sequence>IVGGVSVAIE</sequence>
<dbReference type="EC" id="3.4.-.-"/>
<dbReference type="GO" id="GO:0005576">
    <property type="term" value="C:extracellular region"/>
    <property type="evidence" value="ECO:0007669"/>
    <property type="project" value="UniProtKB-SubCell"/>
</dbReference>
<dbReference type="GO" id="GO:0008233">
    <property type="term" value="F:peptidase activity"/>
    <property type="evidence" value="ECO:0007669"/>
    <property type="project" value="UniProtKB-KW"/>
</dbReference>
<dbReference type="GO" id="GO:0006508">
    <property type="term" value="P:proteolysis"/>
    <property type="evidence" value="ECO:0007669"/>
    <property type="project" value="UniProtKB-KW"/>
</dbReference>
<proteinExistence type="evidence at protein level"/>
<keyword id="KW-0903">Direct protein sequencing</keyword>
<keyword id="KW-0378">Hydrolase</keyword>
<keyword id="KW-0645">Protease</keyword>
<keyword id="KW-0964">Secreted</keyword>
<feature type="chain" id="PRO_0000312841" description="Fibrinolytic enzyme">
    <location>
        <begin position="1"/>
        <end position="10" status="greater than"/>
    </location>
</feature>
<feature type="non-terminal residue" evidence="2">
    <location>
        <position position="10"/>
    </location>
</feature>
<comment type="function">
    <text evidence="1">Hydrolyzes fibrin.</text>
</comment>
<comment type="activity regulation">
    <text evidence="1">Activated by Mg(2+) and Fe(2+) ions. Inhibited by Cu(2+) ions and EDTA. Activity is unaffected by Ca(2+), Ba(2+), Zn(2+), K(+) and Mn(2+) ions.</text>
</comment>
<comment type="biophysicochemical properties">
    <phDependence>
        <text evidence="1">Optimum pH is 6.0. Active from pH 5.0 to 8.0 at 37 degrees Celsius, above pH 8.0 stability decreases rapidly.</text>
    </phDependence>
    <temperatureDependence>
        <text evidence="1">Optimum temperature is 25 degrees Celsius. Active between 15 and 45 degrees Celsius, however activity rapidly decreases after 1 hour incubation at temperatures above 40 degrees Celsius.</text>
    </temperatureDependence>
</comment>
<comment type="subcellular location">
    <subcellularLocation>
        <location evidence="1">Secreted</location>
        <location evidence="1">Extracellular space</location>
    </subcellularLocation>
</comment>
<comment type="similarity">
    <text evidence="3">Belongs to the peptidase S1 family.</text>
</comment>
<organism>
    <name type="scientific">Cordyceps militaris</name>
    <name type="common">Caterpillar fungus</name>
    <name type="synonym">Clavaria militaris</name>
    <dbReference type="NCBI Taxonomy" id="73501"/>
    <lineage>
        <taxon>Eukaryota</taxon>
        <taxon>Fungi</taxon>
        <taxon>Dikarya</taxon>
        <taxon>Ascomycota</taxon>
        <taxon>Pezizomycotina</taxon>
        <taxon>Sordariomycetes</taxon>
        <taxon>Hypocreomycetidae</taxon>
        <taxon>Hypocreales</taxon>
        <taxon>Cordycipitaceae</taxon>
        <taxon>Cordyceps</taxon>
    </lineage>
</organism>
<accession>P85318</accession>
<protein>
    <recommendedName>
        <fullName>Fibrinolytic enzyme</fullName>
        <ecNumber>3.4.-.-</ecNumber>
    </recommendedName>
    <alternativeName>
        <fullName>CMase</fullName>
    </alternativeName>
</protein>